<comment type="function">
    <text evidence="5 7 8 9">Receptor for IZUMO1 present at the cell surface of oocytes (oolemma), which is essential for species-specific gamete recognition and fertilization (PubMed:24739963, PubMed:26859261, PubMed:27309808, PubMed:27416963). The IZUMO1:IZUMO1R/JUNO interaction is a necessary adhesion event between sperm and egg that is required for fertilization but is not sufficient for cell fusion (PubMed:24739963, PubMed:26859261, PubMed:27309808). The ligand-receptor interaction probably does not act as a membrane 'fusogen' (PubMed:24739963, PubMed:26859261, PubMed:27309808). Does not bind folate (PubMed:24739963).</text>
</comment>
<comment type="subunit">
    <text evidence="1 2 5 6 7 8 9 10">Monomer (PubMed:26859261). Interacts with IZUMO1; the interaction is direct (PubMed:24739963, PubMed:25209248, PubMed:26859261, PubMed:27309808, PubMed:27416963, PubMed:32484434, PubMed:36394541). IZUMO1 and IZUMO1R/JUNO form a complex with 1:1 stoichiometry (By similarity). Interacts with WDR54 (By similarity).</text>
</comment>
<comment type="subcellular location">
    <subcellularLocation>
        <location evidence="5 6 8">Cell membrane</location>
        <topology evidence="5">Lipid-anchor</topology>
        <topology evidence="5">GPI-anchor</topology>
    </subcellularLocation>
    <text evidence="5">GPI-anchored at the oolemma.</text>
</comment>
<comment type="alternative products">
    <event type="alternative splicing"/>
    <isoform>
        <id>Q9EQF4-1</id>
        <name>1</name>
        <sequence type="displayed"/>
    </isoform>
    <isoform>
        <id>Q9EQF4-2</id>
        <name>2</name>
        <name>FR4v3</name>
        <sequence type="described" ref="VSP_033414"/>
    </isoform>
</comment>
<comment type="tissue specificity">
    <text evidence="4 5">Widely expressed with higher expression in thymus, spleen and lung (PubMed:11111049). Present at the cell surface of unfertilized oocytes, while it is barely detectable 30 to 40 minutes after fertilization (at protein level) (PubMed:24739963).</text>
</comment>
<comment type="PTM">
    <text evidence="5">The protein is rapidly cleaved following fertilization, being only weakly detectable in zona-intact fertilized eggs at telophase II and undetectable at the pronuclear stage (PubMed:24739963). Sheding is probably required to block to polyspermy and ensuring egg fusion with a single sperm (PubMed:24739963).</text>
</comment>
<comment type="disruption phenotype">
    <text evidence="5">Female mice are infertile and eggs do not fuse with normal sperm (PubMed:24739963). Both male and female mice develop normally and are overtly healthy (PubMed:24739963). Male mice are fertile (PubMed:24739963). Despite infertility, female mice display natural mating behaviors, as assessed by vaginal plug formation and the presence of motile sperm in the reproductive tract when paired with fertile males (PubMed:24739963). They respond to hormone treatment by ovulating morphologically normal eggs at numbers that do not significantly differ from wild-type (PubMed:24739963). However, eggs are not fertilized and have more sperm within their perivitelline space compared to wild-type eggs, demonstrating that the zona pellucida of eggs cannot be penetrated by sperm in vivo (PubMed:24739963).</text>
</comment>
<comment type="miscellaneous">
    <text evidence="16">Was named 'Juno' after the Roman goddess of fertility and marriage.</text>
</comment>
<comment type="similarity">
    <text evidence="15">Belongs to the folate receptor family.</text>
</comment>
<comment type="caution">
    <text evidence="7 16">In contrast to FOLR1 and FOLR2, unable to bind folate.</text>
</comment>
<protein>
    <recommendedName>
        <fullName evidence="15">Sperm-egg fusion protein Juno</fullName>
    </recommendedName>
    <alternativeName>
        <fullName>Folate receptor 4</fullName>
    </alternativeName>
    <alternativeName>
        <fullName evidence="11">Folate receptor delta</fullName>
        <shortName evidence="11">FR-delta</shortName>
    </alternativeName>
    <alternativeName>
        <fullName evidence="11">Folate-binding protein 3</fullName>
    </alternativeName>
    <alternativeName>
        <fullName evidence="12 13">IZUMO1 receptor protein JUNO</fullName>
    </alternativeName>
</protein>
<dbReference type="EMBL" id="AF250145">
    <property type="protein sequence ID" value="AAG36877.1"/>
    <property type="molecule type" value="mRNA"/>
</dbReference>
<dbReference type="EMBL" id="EU326437">
    <property type="protein sequence ID" value="ABY56297.1"/>
    <property type="molecule type" value="mRNA"/>
</dbReference>
<dbReference type="EMBL" id="EU326438">
    <property type="protein sequence ID" value="ABY56298.1"/>
    <property type="molecule type" value="mRNA"/>
</dbReference>
<dbReference type="EMBL" id="BC028431">
    <property type="protein sequence ID" value="AAH28431.1"/>
    <property type="molecule type" value="mRNA"/>
</dbReference>
<dbReference type="CCDS" id="CCDS22831.1">
    <molecule id="Q9EQF4-1"/>
</dbReference>
<dbReference type="RefSeq" id="NP_075026.1">
    <molecule id="Q9EQF4-1"/>
    <property type="nucleotide sequence ID" value="NM_022888.3"/>
</dbReference>
<dbReference type="RefSeq" id="XP_006510593.1">
    <molecule id="Q9EQF4-2"/>
    <property type="nucleotide sequence ID" value="XM_006510530.2"/>
</dbReference>
<dbReference type="RefSeq" id="XP_006510594.1">
    <molecule id="Q9EQF4-2"/>
    <property type="nucleotide sequence ID" value="XM_006510531.3"/>
</dbReference>
<dbReference type="PDB" id="5EJN">
    <property type="method" value="X-ray"/>
    <property type="resolution" value="2.70 A"/>
    <property type="chains" value="A/B=19-221"/>
</dbReference>
<dbReference type="PDB" id="5JYJ">
    <property type="method" value="X-ray"/>
    <property type="resolution" value="2.30 A"/>
    <property type="chains" value="A=20-221"/>
</dbReference>
<dbReference type="PDBsum" id="5EJN"/>
<dbReference type="PDBsum" id="5JYJ"/>
<dbReference type="SMR" id="Q9EQF4"/>
<dbReference type="FunCoup" id="Q9EQF4">
    <property type="interactions" value="188"/>
</dbReference>
<dbReference type="STRING" id="10090.ENSMUSP00000034409"/>
<dbReference type="GlyCosmos" id="Q9EQF4">
    <property type="glycosylation" value="2 sites, No reported glycans"/>
</dbReference>
<dbReference type="GlyGen" id="Q9EQF4">
    <property type="glycosylation" value="2 sites"/>
</dbReference>
<dbReference type="iPTMnet" id="Q9EQF4"/>
<dbReference type="PaxDb" id="10090-ENSMUSP00000034409"/>
<dbReference type="Antibodypedia" id="45349">
    <property type="antibodies" value="278 antibodies from 18 providers"/>
</dbReference>
<dbReference type="DNASU" id="64931"/>
<dbReference type="Ensembl" id="ENSMUST00000034409.14">
    <molecule id="Q9EQF4-1"/>
    <property type="protein sequence ID" value="ENSMUSP00000034409.8"/>
    <property type="gene ID" value="ENSMUSG00000031933.18"/>
</dbReference>
<dbReference type="GeneID" id="64931"/>
<dbReference type="KEGG" id="mmu:64931"/>
<dbReference type="UCSC" id="uc009ofh.2">
    <molecule id="Q9EQF4-1"/>
    <property type="organism name" value="mouse"/>
</dbReference>
<dbReference type="UCSC" id="uc012gom.1">
    <molecule id="Q9EQF4-2"/>
    <property type="organism name" value="mouse"/>
</dbReference>
<dbReference type="AGR" id="MGI:1929185"/>
<dbReference type="CTD" id="390243"/>
<dbReference type="MGI" id="MGI:1929185">
    <property type="gene designation" value="Izumo1r"/>
</dbReference>
<dbReference type="VEuPathDB" id="HostDB:ENSMUSG00000031933"/>
<dbReference type="eggNOG" id="ENOG502RYYP">
    <property type="taxonomic scope" value="Eukaryota"/>
</dbReference>
<dbReference type="GeneTree" id="ENSGT00950000183144"/>
<dbReference type="InParanoid" id="Q9EQF4"/>
<dbReference type="OMA" id="NAPLCQE"/>
<dbReference type="OrthoDB" id="567542at2759"/>
<dbReference type="PhylomeDB" id="Q9EQF4"/>
<dbReference type="TreeFam" id="TF328532"/>
<dbReference type="Reactome" id="R-MMU-163125">
    <property type="pathway name" value="Post-translational modification: synthesis of GPI-anchored proteins"/>
</dbReference>
<dbReference type="BioGRID-ORCS" id="64931">
    <property type="hits" value="2 hits in 75 CRISPR screens"/>
</dbReference>
<dbReference type="ChiTaRS" id="Izumo1r">
    <property type="organism name" value="mouse"/>
</dbReference>
<dbReference type="EvolutionaryTrace" id="Q9EQF4"/>
<dbReference type="PRO" id="PR:Q9EQF4"/>
<dbReference type="Proteomes" id="UP000000589">
    <property type="component" value="Chromosome 9"/>
</dbReference>
<dbReference type="RNAct" id="Q9EQF4">
    <property type="molecule type" value="protein"/>
</dbReference>
<dbReference type="Bgee" id="ENSMUSG00000031933">
    <property type="expression patterns" value="Expressed in animal zygote and 31 other cell types or tissues"/>
</dbReference>
<dbReference type="ExpressionAtlas" id="Q9EQF4">
    <property type="expression patterns" value="baseline and differential"/>
</dbReference>
<dbReference type="GO" id="GO:0016020">
    <property type="term" value="C:membrane"/>
    <property type="evidence" value="ECO:0000304"/>
    <property type="project" value="MGI"/>
</dbReference>
<dbReference type="GO" id="GO:0005886">
    <property type="term" value="C:plasma membrane"/>
    <property type="evidence" value="ECO:0000314"/>
    <property type="project" value="UniProt"/>
</dbReference>
<dbReference type="GO" id="GO:0098552">
    <property type="term" value="C:side of membrane"/>
    <property type="evidence" value="ECO:0007669"/>
    <property type="project" value="UniProtKB-KW"/>
</dbReference>
<dbReference type="GO" id="GO:0038023">
    <property type="term" value="F:signaling receptor activity"/>
    <property type="evidence" value="ECO:0000314"/>
    <property type="project" value="UniProt"/>
</dbReference>
<dbReference type="GO" id="GO:0005102">
    <property type="term" value="F:signaling receptor binding"/>
    <property type="evidence" value="ECO:0000353"/>
    <property type="project" value="UniProtKB"/>
</dbReference>
<dbReference type="GO" id="GO:0007155">
    <property type="term" value="P:cell adhesion"/>
    <property type="evidence" value="ECO:0000314"/>
    <property type="project" value="UniProtKB"/>
</dbReference>
<dbReference type="GO" id="GO:0007342">
    <property type="term" value="P:fusion of sperm to egg plasma membrane involved in single fertilization"/>
    <property type="evidence" value="ECO:0000314"/>
    <property type="project" value="UniProtKB"/>
</dbReference>
<dbReference type="GO" id="GO:0035036">
    <property type="term" value="P:sperm-egg recognition"/>
    <property type="evidence" value="ECO:0000314"/>
    <property type="project" value="UniProtKB"/>
</dbReference>
<dbReference type="InterPro" id="IPR004269">
    <property type="entry name" value="Folate_rcpt"/>
</dbReference>
<dbReference type="InterPro" id="IPR018143">
    <property type="entry name" value="Folate_rcpt-like"/>
</dbReference>
<dbReference type="PANTHER" id="PTHR10517">
    <property type="entry name" value="FOLATE RECEPTOR"/>
    <property type="match status" value="1"/>
</dbReference>
<dbReference type="PANTHER" id="PTHR10517:SF10">
    <property type="entry name" value="SPERM-EGG FUSION PROTEIN JUNO"/>
    <property type="match status" value="1"/>
</dbReference>
<dbReference type="Pfam" id="PF03024">
    <property type="entry name" value="Folate_rec"/>
    <property type="match status" value="1"/>
</dbReference>
<name>JUNO_MOUSE</name>
<feature type="signal peptide" evidence="3">
    <location>
        <begin position="1"/>
        <end position="19"/>
    </location>
</feature>
<feature type="chain" id="PRO_0000332988" description="Sperm-egg fusion protein Juno">
    <location>
        <begin position="20"/>
        <end position="222"/>
    </location>
</feature>
<feature type="propeptide" id="PRO_0000429473" evidence="3">
    <location>
        <begin position="223"/>
        <end position="244"/>
    </location>
</feature>
<feature type="region of interest" description="Important for interaction with IZUMO1" evidence="1">
    <location>
        <begin position="62"/>
        <end position="81"/>
    </location>
</feature>
<feature type="lipid moiety-binding region" description="GPI-anchor amidated glycine" evidence="3">
    <location>
        <position position="222"/>
    </location>
</feature>
<feature type="glycosylation site" description="N-linked (GlcNAc...) asparagine" evidence="3 17">
    <location>
        <position position="73"/>
    </location>
</feature>
<feature type="glycosylation site" description="N-linked (GlcNAc...) asparagine" evidence="7 9 18 19">
    <location>
        <position position="185"/>
    </location>
</feature>
<feature type="disulfide bond" evidence="7 9 18 19">
    <location>
        <begin position="27"/>
        <end position="55"/>
    </location>
</feature>
<feature type="disulfide bond" evidence="7 9 18 19">
    <location>
        <begin position="47"/>
        <end position="95"/>
    </location>
</feature>
<feature type="disulfide bond" evidence="7 9 18 19">
    <location>
        <begin position="56"/>
        <end position="99"/>
    </location>
</feature>
<feature type="disulfide bond" evidence="7 9 18 19">
    <location>
        <begin position="79"/>
        <end position="166"/>
    </location>
</feature>
<feature type="disulfide bond" evidence="7 9 18 19">
    <location>
        <begin position="86"/>
        <end position="137"/>
    </location>
</feature>
<feature type="disulfide bond" evidence="7 9 18 19">
    <location>
        <begin position="126"/>
        <end position="200"/>
    </location>
</feature>
<feature type="disulfide bond" evidence="7 9 18 19">
    <location>
        <begin position="130"/>
        <end position="180"/>
    </location>
</feature>
<feature type="disulfide bond" evidence="9 19">
    <location>
        <begin position="143"/>
        <end position="160"/>
    </location>
</feature>
<feature type="splice variant" id="VSP_033414" description="In isoform 2." evidence="14">
    <original>E</original>
    <variation>EGEWINYALVALRLGEAARGSEGKGQWKVRSPFSIPT</variation>
    <location>
        <position position="155"/>
    </location>
</feature>
<feature type="mutagenesis site" description="Impaired ability to promote sperm-egg interaction due to reduced interaction with IZUMO1." evidence="9">
    <original>W</original>
    <variation>A</variation>
    <location>
        <position position="62"/>
    </location>
</feature>
<feature type="mutagenesis site" description="Does not affect ability to promote sperm-egg interaction." evidence="9">
    <original>L</original>
    <variation>A</variation>
    <location>
        <position position="66"/>
    </location>
</feature>
<feature type="mutagenesis site" description="Does not affect ability to promote sperm-egg interaction." evidence="9">
    <original>N</original>
    <variation>D</variation>
    <location>
        <position position="73"/>
    </location>
</feature>
<feature type="mutagenesis site" description="Reduces apparent molecular weight of the protein, in agreement with the loss of one glycosylation site. Abolishes secretion of the extracellular domain; when associated with G-185." evidence="7">
    <original>N</original>
    <variation>Q</variation>
    <location>
        <position position="73"/>
    </location>
</feature>
<feature type="mutagenesis site" description="Does not affect ability to promote sperm-egg interaction." evidence="9">
    <original>H</original>
    <variation>A</variation>
    <location>
        <position position="97"/>
    </location>
</feature>
<feature type="mutagenesis site" description="Does not affect ability to promote sperm-egg interaction." evidence="9">
    <original>W</original>
    <variation>A</variation>
    <location>
        <position position="184"/>
    </location>
</feature>
<feature type="mutagenesis site" description="Reduced stability of the protein." evidence="9">
    <original>N</original>
    <variation>D</variation>
    <location>
        <position position="185"/>
    </location>
</feature>
<feature type="mutagenesis site" description="Reduces apparent molecular weight of the protein, in agreement with the loss of one glycosylation site. Abolishes secretion of the extracellular domain; when associated with Q-73." evidence="7">
    <original>N</original>
    <variation>G</variation>
    <location>
        <position position="185"/>
    </location>
</feature>
<feature type="mutagenesis site" description="No effect on interaction with IZUMO1." evidence="7">
    <original>N</original>
    <variation>S</variation>
    <location>
        <position position="185"/>
    </location>
</feature>
<feature type="strand" evidence="21">
    <location>
        <begin position="30"/>
        <end position="33"/>
    </location>
</feature>
<feature type="helix" evidence="21">
    <location>
        <begin position="45"/>
        <end position="50"/>
    </location>
</feature>
<feature type="strand" evidence="21">
    <location>
        <begin position="53"/>
        <end position="56"/>
    </location>
</feature>
<feature type="helix" evidence="21">
    <location>
        <begin position="58"/>
        <end position="63"/>
    </location>
</feature>
<feature type="strand" evidence="21">
    <location>
        <begin position="71"/>
        <end position="73"/>
    </location>
</feature>
<feature type="strand" evidence="21">
    <location>
        <begin position="78"/>
        <end position="80"/>
    </location>
</feature>
<feature type="helix" evidence="21">
    <location>
        <begin position="84"/>
        <end position="99"/>
    </location>
</feature>
<feature type="helix" evidence="20">
    <location>
        <begin position="101"/>
        <end position="103"/>
    </location>
</feature>
<feature type="helix" evidence="21">
    <location>
        <begin position="104"/>
        <end position="106"/>
    </location>
</feature>
<feature type="strand" evidence="21">
    <location>
        <begin position="107"/>
        <end position="113"/>
    </location>
</feature>
<feature type="strand" evidence="21">
    <location>
        <begin position="115"/>
        <end position="120"/>
    </location>
</feature>
<feature type="strand" evidence="21">
    <location>
        <begin position="123"/>
        <end position="125"/>
    </location>
</feature>
<feature type="helix" evidence="21">
    <location>
        <begin position="127"/>
        <end position="136"/>
    </location>
</feature>
<feature type="turn" evidence="21">
    <location>
        <begin position="137"/>
        <end position="139"/>
    </location>
</feature>
<feature type="strand" evidence="21">
    <location>
        <begin position="141"/>
        <end position="143"/>
    </location>
</feature>
<feature type="helix" evidence="21">
    <location>
        <begin position="169"/>
        <end position="172"/>
    </location>
</feature>
<feature type="helix" evidence="21">
    <location>
        <begin position="176"/>
        <end position="182"/>
    </location>
</feature>
<feature type="turn" evidence="21">
    <location>
        <begin position="183"/>
        <end position="185"/>
    </location>
</feature>
<feature type="strand" evidence="21">
    <location>
        <begin position="186"/>
        <end position="190"/>
    </location>
</feature>
<feature type="strand" evidence="21">
    <location>
        <begin position="197"/>
        <end position="201"/>
    </location>
</feature>
<feature type="helix" evidence="21">
    <location>
        <begin position="214"/>
        <end position="221"/>
    </location>
</feature>
<evidence type="ECO:0000250" key="1">
    <source>
        <dbReference type="UniProtKB" id="A6ND01"/>
    </source>
</evidence>
<evidence type="ECO:0000250" key="2">
    <source>
        <dbReference type="UniProtKB" id="F1M928"/>
    </source>
</evidence>
<evidence type="ECO:0000255" key="3"/>
<evidence type="ECO:0000269" key="4">
    <source>
    </source>
</evidence>
<evidence type="ECO:0000269" key="5">
    <source>
    </source>
</evidence>
<evidence type="ECO:0000269" key="6">
    <source>
    </source>
</evidence>
<evidence type="ECO:0000269" key="7">
    <source>
    </source>
</evidence>
<evidence type="ECO:0000269" key="8">
    <source>
    </source>
</evidence>
<evidence type="ECO:0000269" key="9">
    <source>
    </source>
</evidence>
<evidence type="ECO:0000269" key="10">
    <source>
    </source>
</evidence>
<evidence type="ECO:0000303" key="11">
    <source>
    </source>
</evidence>
<evidence type="ECO:0000303" key="12">
    <source>
    </source>
</evidence>
<evidence type="ECO:0000303" key="13">
    <source>
    </source>
</evidence>
<evidence type="ECO:0000303" key="14">
    <source ref="2"/>
</evidence>
<evidence type="ECO:0000305" key="15"/>
<evidence type="ECO:0000305" key="16">
    <source>
    </source>
</evidence>
<evidence type="ECO:0000305" key="17">
    <source>
    </source>
</evidence>
<evidence type="ECO:0007744" key="18">
    <source>
        <dbReference type="PDB" id="5EJN"/>
    </source>
</evidence>
<evidence type="ECO:0007744" key="19">
    <source>
        <dbReference type="PDB" id="5JYJ"/>
    </source>
</evidence>
<evidence type="ECO:0007829" key="20">
    <source>
        <dbReference type="PDB" id="5EJN"/>
    </source>
</evidence>
<evidence type="ECO:0007829" key="21">
    <source>
        <dbReference type="PDB" id="5JYJ"/>
    </source>
</evidence>
<keyword id="KW-0002">3D-structure</keyword>
<keyword id="KW-0025">Alternative splicing</keyword>
<keyword id="KW-1003">Cell membrane</keyword>
<keyword id="KW-1015">Disulfide bond</keyword>
<keyword id="KW-0278">Fertilization</keyword>
<keyword id="KW-0325">Glycoprotein</keyword>
<keyword id="KW-0336">GPI-anchor</keyword>
<keyword id="KW-0449">Lipoprotein</keyword>
<keyword id="KW-0472">Membrane</keyword>
<keyword id="KW-0675">Receptor</keyword>
<keyword id="KW-1185">Reference proteome</keyword>
<keyword id="KW-0732">Signal</keyword>
<proteinExistence type="evidence at protein level"/>
<accession>Q9EQF4</accession>
<accession>B0FFS5</accession>
<reference key="1">
    <citation type="journal article" date="2000" name="Gene">
        <title>Identification of two putative novel folate receptor genes in humans and mouse.</title>
        <authorList>
            <person name="Spiegelstein O."/>
            <person name="Eudy J.D."/>
            <person name="Finnell R.H."/>
        </authorList>
    </citation>
    <scope>NUCLEOTIDE SEQUENCE [MRNA] (ISOFORM 1)</scope>
    <scope>TISSUE SPECIFICITY</scope>
    <source>
        <strain>C57BL/6J</strain>
    </source>
</reference>
<reference key="2">
    <citation type="submission" date="2007-12" db="EMBL/GenBank/DDBJ databases">
        <authorList>
            <person name="Ni B."/>
            <person name="Jia Z.-C."/>
            <person name="Tian Y."/>
            <person name="Zhao R."/>
        </authorList>
    </citation>
    <scope>NUCLEOTIDE SEQUENCE [MRNA] (ISOFORM 2)</scope>
    <source>
        <strain>BALB/cJ</strain>
        <strain>C57BL/6J</strain>
        <tissue>Spleen</tissue>
    </source>
</reference>
<reference key="3">
    <citation type="journal article" date="2004" name="Genome Res.">
        <title>The status, quality, and expansion of the NIH full-length cDNA project: the Mammalian Gene Collection (MGC).</title>
        <authorList>
            <consortium name="The MGC Project Team"/>
        </authorList>
    </citation>
    <scope>NUCLEOTIDE SEQUENCE [LARGE SCALE MRNA] (ISOFORM 1)</scope>
    <source>
        <strain>C57BL/6J</strain>
        <tissue>Thymus</tissue>
    </source>
</reference>
<reference key="4">
    <citation type="journal article" date="2014" name="Development">
        <title>Binding of sperm protein Izumo1 and its egg receptor Juno drives Cd9 accumulation in the intercellular contact area prior to fusion during mammalian fertilization.</title>
        <authorList>
            <person name="Chalbi M."/>
            <person name="Barraud-Lange V."/>
            <person name="Ravaux B."/>
            <person name="Howan K."/>
            <person name="Rodriguez N."/>
            <person name="Soule P."/>
            <person name="Ndzoudi A."/>
            <person name="Boucheix C."/>
            <person name="Rubinstein E."/>
            <person name="Wolf J.P."/>
            <person name="Ziyyat A."/>
            <person name="Perez E."/>
            <person name="Pincet F."/>
            <person name="Gourier C."/>
        </authorList>
    </citation>
    <scope>SUBCELLULAR LOCATION</scope>
    <scope>INTERACTION WITH IZUMO1</scope>
</reference>
<reference key="5">
    <citation type="journal article" date="2014" name="Nature">
        <title>Juno is the egg Izumo receptor and is essential for mammalian fertilization.</title>
        <authorList>
            <person name="Bianchi E."/>
            <person name="Doe B."/>
            <person name="Goulding D."/>
            <person name="Wright G.J."/>
        </authorList>
    </citation>
    <scope>FUNCTION</scope>
    <scope>SUBCELLULAR LOCATION</scope>
    <scope>GPI-ANCHOR</scope>
    <scope>DISRUPTION PHENOTYPE</scope>
    <scope>PROTEOLYTIC PROCESSING</scope>
    <scope>INTERACTION WITH IZUMO1</scope>
</reference>
<reference key="6">
    <citation type="journal article" date="2016" name="Nature">
        <title>Structure of IZUMO1-JUNO reveals sperm-oocyte recognition during mammalian fertilization.</title>
        <authorList>
            <person name="Ohto U."/>
            <person name="Ishida H."/>
            <person name="Krayukhina E."/>
            <person name="Uchiyama S."/>
            <person name="Inoue N."/>
            <person name="Shimizu T."/>
        </authorList>
    </citation>
    <scope>SUBCELLULAR LOCATION</scope>
    <scope>FUNCTION</scope>
    <scope>INTERACTION WITH IZUMO1</scope>
</reference>
<reference key="7">
    <citation type="journal article" date="2020" name="Elife">
        <title>TMEM95 is a sperm membrane protein essential for mammalian fertilization.</title>
        <authorList>
            <person name="Lamas-Toranzo I."/>
            <person name="Hamze J.G."/>
            <person name="Bianchi E."/>
            <person name="Fernandez-Fuertes B."/>
            <person name="Perez-Cerezales S."/>
            <person name="Laguna-Barraza R."/>
            <person name="Fernandez-Gonzalez R."/>
            <person name="Lonergan P."/>
            <person name="Gutierrez-Adan A."/>
            <person name="Wright G.J."/>
            <person name="Jimenez-Movilla M."/>
            <person name="Bermejo-Alvarez P."/>
        </authorList>
    </citation>
    <scope>INTERACTION WITH IZUMO1</scope>
</reference>
<reference key="8">
    <citation type="journal article" date="2023" name="J. Cell Biol.">
        <title>A novel function for the sperm adhesion protein IZUMO1 in cell-cell fusion.</title>
        <authorList>
            <person name="Brukman N.G."/>
            <person name="Nakajima K.P."/>
            <person name="Valansi C."/>
            <person name="Flyak K."/>
            <person name="Li X."/>
            <person name="Higashiyama T."/>
            <person name="Podbilewicz B."/>
        </authorList>
    </citation>
    <scope>INTERACTION WITH IZUMO1</scope>
</reference>
<reference key="9">
    <citation type="journal article" date="2016" name="Curr. Biol.">
        <title>Divergent evolution of vitamin B9 binding underlies Juno-mediated adhesion of mammalian gametes.</title>
        <authorList>
            <person name="Han L."/>
            <person name="Nishimura K."/>
            <person name="Sadat Al Hosseini H."/>
            <person name="Bianchi E."/>
            <person name="Wright G.J."/>
            <person name="Jovine L."/>
        </authorList>
    </citation>
    <scope>X-RAY CRYSTALLOGRAPHY (2.70 ANGSTROMS) OF 19-221</scope>
    <scope>FUNCTION</scope>
    <scope>SUBUNIT</scope>
    <scope>TOPOLOGY</scope>
    <scope>DISULFIDE BONDS</scope>
    <scope>GLYCOSYLATION AT ASN-73 AND ASN-185</scope>
    <scope>MUTAGENESIS OF ASN-73 AND ASN-185</scope>
</reference>
<reference evidence="19" key="10">
    <citation type="journal article" date="2016" name="Nat. Commun.">
        <title>Structural and functional insights into IZUMO1 recognition by JUNO in mammalian fertilization.</title>
        <authorList>
            <person name="Kato K."/>
            <person name="Satouh Y."/>
            <person name="Nishimasu H."/>
            <person name="Kurabayashi A."/>
            <person name="Morita J."/>
            <person name="Fujihara Y."/>
            <person name="Oji A."/>
            <person name="Ishitani R."/>
            <person name="Ikawa M."/>
            <person name="Nureki O."/>
        </authorList>
    </citation>
    <scope>X-RAY CRYSTALLOGRAPHY (2.30 ANGSTROMS) OF 20-221 OF ASN-73 MUTANT</scope>
    <scope>FUNCTION</scope>
    <scope>INTERACTION WITH IZUMO1</scope>
    <scope>DISULFIDE BONDS</scope>
    <scope>GLYCOSYLATION AT ASN-185</scope>
    <scope>MUTAGENESIS OF TRP-62; LEU-66; ASN-73; HIS-97; TRP-184 AND ASN-185</scope>
</reference>
<organism>
    <name type="scientific">Mus musculus</name>
    <name type="common">Mouse</name>
    <dbReference type="NCBI Taxonomy" id="10090"/>
    <lineage>
        <taxon>Eukaryota</taxon>
        <taxon>Metazoa</taxon>
        <taxon>Chordata</taxon>
        <taxon>Craniata</taxon>
        <taxon>Vertebrata</taxon>
        <taxon>Euteleostomi</taxon>
        <taxon>Mammalia</taxon>
        <taxon>Eutheria</taxon>
        <taxon>Euarchontoglires</taxon>
        <taxon>Glires</taxon>
        <taxon>Rodentia</taxon>
        <taxon>Myomorpha</taxon>
        <taxon>Muroidea</taxon>
        <taxon>Muridae</taxon>
        <taxon>Murinae</taxon>
        <taxon>Mus</taxon>
        <taxon>Mus</taxon>
    </lineage>
</organism>
<gene>
    <name evidence="1" type="primary">Izumo1r</name>
    <name evidence="11" type="synonym">Folbp3</name>
    <name type="synonym">Folr4</name>
    <name evidence="12 13" type="synonym">Juno</name>
</gene>
<sequence length="244" mass="28203">MAQWWQILLGLWAVLPTLAGDKLLSVCMNSKRHKQEPGPEDELYQECRPWEDNACCTRSTSWEAHLEEPLLFNFSMMHCGLLTPACRKHFIQAICFHECSPNLGPWIQPVVPNGQEEQRVWGVPLCQEDCEDWWRACHSSLTCKSNWLHGWDWSEEKKHCPAHEPCLPFSYHFPTPDDLCEKIWNNTFKASPERRNSGRCLQKWFEPTLSNPNVEVALHFAGSALAPQLSYTLPAFSLCLLFHP</sequence>